<gene>
    <name evidence="1" type="primary">coaE</name>
    <name type="ordered locus">Jann_0195</name>
</gene>
<protein>
    <recommendedName>
        <fullName evidence="1">Dephospho-CoA kinase</fullName>
        <ecNumber evidence="1">2.7.1.24</ecNumber>
    </recommendedName>
    <alternativeName>
        <fullName evidence="1">Dephosphocoenzyme A kinase</fullName>
    </alternativeName>
</protein>
<sequence length="194" mass="20718">MSFALGLTGSIGMGKSTTAAMFRDLDVPVWDADATVHKLYARGGAAVAPIDALVPGAMKDGAIDRAVLRAAIADDASLLKQIEAIVHPLVAKDRAMFRDIHSTAPLIILDIPLLFETGGDAACDATLVVTTSPEEQRRRVLARGTSEDTLHDLLSRQMPDAEKRARATYVIETDTLDGTRQDVAHLVSKLTEGT</sequence>
<dbReference type="EC" id="2.7.1.24" evidence="1"/>
<dbReference type="EMBL" id="CP000264">
    <property type="protein sequence ID" value="ABD53112.1"/>
    <property type="molecule type" value="Genomic_DNA"/>
</dbReference>
<dbReference type="RefSeq" id="WP_011453321.1">
    <property type="nucleotide sequence ID" value="NC_007802.1"/>
</dbReference>
<dbReference type="SMR" id="Q28W00"/>
<dbReference type="STRING" id="290400.Jann_0195"/>
<dbReference type="KEGG" id="jan:Jann_0195"/>
<dbReference type="eggNOG" id="COG0237">
    <property type="taxonomic scope" value="Bacteria"/>
</dbReference>
<dbReference type="HOGENOM" id="CLU_057180_3_0_5"/>
<dbReference type="OrthoDB" id="9812943at2"/>
<dbReference type="UniPathway" id="UPA00241">
    <property type="reaction ID" value="UER00356"/>
</dbReference>
<dbReference type="Proteomes" id="UP000008326">
    <property type="component" value="Chromosome"/>
</dbReference>
<dbReference type="GO" id="GO:0005737">
    <property type="term" value="C:cytoplasm"/>
    <property type="evidence" value="ECO:0007669"/>
    <property type="project" value="UniProtKB-SubCell"/>
</dbReference>
<dbReference type="GO" id="GO:0005524">
    <property type="term" value="F:ATP binding"/>
    <property type="evidence" value="ECO:0007669"/>
    <property type="project" value="UniProtKB-UniRule"/>
</dbReference>
<dbReference type="GO" id="GO:0004140">
    <property type="term" value="F:dephospho-CoA kinase activity"/>
    <property type="evidence" value="ECO:0007669"/>
    <property type="project" value="UniProtKB-UniRule"/>
</dbReference>
<dbReference type="GO" id="GO:0015937">
    <property type="term" value="P:coenzyme A biosynthetic process"/>
    <property type="evidence" value="ECO:0007669"/>
    <property type="project" value="UniProtKB-UniRule"/>
</dbReference>
<dbReference type="CDD" id="cd02022">
    <property type="entry name" value="DPCK"/>
    <property type="match status" value="1"/>
</dbReference>
<dbReference type="Gene3D" id="3.40.50.300">
    <property type="entry name" value="P-loop containing nucleotide triphosphate hydrolases"/>
    <property type="match status" value="1"/>
</dbReference>
<dbReference type="HAMAP" id="MF_00376">
    <property type="entry name" value="Dephospho_CoA_kinase"/>
    <property type="match status" value="1"/>
</dbReference>
<dbReference type="InterPro" id="IPR001977">
    <property type="entry name" value="Depp_CoAkinase"/>
</dbReference>
<dbReference type="InterPro" id="IPR027417">
    <property type="entry name" value="P-loop_NTPase"/>
</dbReference>
<dbReference type="NCBIfam" id="TIGR00152">
    <property type="entry name" value="dephospho-CoA kinase"/>
    <property type="match status" value="1"/>
</dbReference>
<dbReference type="PANTHER" id="PTHR10695:SF46">
    <property type="entry name" value="BIFUNCTIONAL COENZYME A SYNTHASE-RELATED"/>
    <property type="match status" value="1"/>
</dbReference>
<dbReference type="PANTHER" id="PTHR10695">
    <property type="entry name" value="DEPHOSPHO-COA KINASE-RELATED"/>
    <property type="match status" value="1"/>
</dbReference>
<dbReference type="Pfam" id="PF01121">
    <property type="entry name" value="CoaE"/>
    <property type="match status" value="1"/>
</dbReference>
<dbReference type="SUPFAM" id="SSF52540">
    <property type="entry name" value="P-loop containing nucleoside triphosphate hydrolases"/>
    <property type="match status" value="1"/>
</dbReference>
<dbReference type="PROSITE" id="PS51219">
    <property type="entry name" value="DPCK"/>
    <property type="match status" value="1"/>
</dbReference>
<feature type="chain" id="PRO_0000243297" description="Dephospho-CoA kinase">
    <location>
        <begin position="1"/>
        <end position="194"/>
    </location>
</feature>
<feature type="domain" description="DPCK" evidence="1">
    <location>
        <begin position="4"/>
        <end position="194"/>
    </location>
</feature>
<feature type="binding site" evidence="1">
    <location>
        <begin position="12"/>
        <end position="17"/>
    </location>
    <ligand>
        <name>ATP</name>
        <dbReference type="ChEBI" id="CHEBI:30616"/>
    </ligand>
</feature>
<organism>
    <name type="scientific">Jannaschia sp. (strain CCS1)</name>
    <dbReference type="NCBI Taxonomy" id="290400"/>
    <lineage>
        <taxon>Bacteria</taxon>
        <taxon>Pseudomonadati</taxon>
        <taxon>Pseudomonadota</taxon>
        <taxon>Alphaproteobacteria</taxon>
        <taxon>Rhodobacterales</taxon>
        <taxon>Roseobacteraceae</taxon>
        <taxon>Jannaschia</taxon>
    </lineage>
</organism>
<accession>Q28W00</accession>
<proteinExistence type="inferred from homology"/>
<evidence type="ECO:0000255" key="1">
    <source>
        <dbReference type="HAMAP-Rule" id="MF_00376"/>
    </source>
</evidence>
<reference key="1">
    <citation type="submission" date="2006-02" db="EMBL/GenBank/DDBJ databases">
        <title>Complete sequence of chromosome of Jannaschia sp. CCS1.</title>
        <authorList>
            <consortium name="US DOE Joint Genome Institute"/>
            <person name="Copeland A."/>
            <person name="Lucas S."/>
            <person name="Lapidus A."/>
            <person name="Barry K."/>
            <person name="Detter J.C."/>
            <person name="Glavina del Rio T."/>
            <person name="Hammon N."/>
            <person name="Israni S."/>
            <person name="Pitluck S."/>
            <person name="Brettin T."/>
            <person name="Bruce D."/>
            <person name="Han C."/>
            <person name="Tapia R."/>
            <person name="Gilna P."/>
            <person name="Chertkov O."/>
            <person name="Saunders E."/>
            <person name="Schmutz J."/>
            <person name="Larimer F."/>
            <person name="Land M."/>
            <person name="Kyrpides N."/>
            <person name="Lykidis A."/>
            <person name="Moran M.A."/>
            <person name="Belas R."/>
            <person name="Ye W."/>
            <person name="Buchan A."/>
            <person name="Gonzalez J.M."/>
            <person name="Schell M.A."/>
            <person name="Richardson P."/>
        </authorList>
    </citation>
    <scope>NUCLEOTIDE SEQUENCE [LARGE SCALE GENOMIC DNA]</scope>
    <source>
        <strain>CCS1</strain>
    </source>
</reference>
<comment type="function">
    <text evidence="1">Catalyzes the phosphorylation of the 3'-hydroxyl group of dephosphocoenzyme A to form coenzyme A.</text>
</comment>
<comment type="catalytic activity">
    <reaction evidence="1">
        <text>3'-dephospho-CoA + ATP = ADP + CoA + H(+)</text>
        <dbReference type="Rhea" id="RHEA:18245"/>
        <dbReference type="ChEBI" id="CHEBI:15378"/>
        <dbReference type="ChEBI" id="CHEBI:30616"/>
        <dbReference type="ChEBI" id="CHEBI:57287"/>
        <dbReference type="ChEBI" id="CHEBI:57328"/>
        <dbReference type="ChEBI" id="CHEBI:456216"/>
        <dbReference type="EC" id="2.7.1.24"/>
    </reaction>
</comment>
<comment type="pathway">
    <text evidence="1">Cofactor biosynthesis; coenzyme A biosynthesis; CoA from (R)-pantothenate: step 5/5.</text>
</comment>
<comment type="subcellular location">
    <subcellularLocation>
        <location evidence="1">Cytoplasm</location>
    </subcellularLocation>
</comment>
<comment type="similarity">
    <text evidence="1">Belongs to the CoaE family.</text>
</comment>
<name>COAE_JANSC</name>
<keyword id="KW-0067">ATP-binding</keyword>
<keyword id="KW-0173">Coenzyme A biosynthesis</keyword>
<keyword id="KW-0963">Cytoplasm</keyword>
<keyword id="KW-0418">Kinase</keyword>
<keyword id="KW-0547">Nucleotide-binding</keyword>
<keyword id="KW-1185">Reference proteome</keyword>
<keyword id="KW-0808">Transferase</keyword>